<comment type="function">
    <text evidence="1">Catalyzes the deamination of dCTP to dUTP.</text>
</comment>
<comment type="catalytic activity">
    <reaction evidence="1">
        <text>dCTP + H2O + H(+) = dUTP + NH4(+)</text>
        <dbReference type="Rhea" id="RHEA:22680"/>
        <dbReference type="ChEBI" id="CHEBI:15377"/>
        <dbReference type="ChEBI" id="CHEBI:15378"/>
        <dbReference type="ChEBI" id="CHEBI:28938"/>
        <dbReference type="ChEBI" id="CHEBI:61481"/>
        <dbReference type="ChEBI" id="CHEBI:61555"/>
        <dbReference type="EC" id="3.5.4.13"/>
    </reaction>
</comment>
<comment type="pathway">
    <text evidence="1">Pyrimidine metabolism; dUMP biosynthesis; dUMP from dCTP (dUTP route): step 1/2.</text>
</comment>
<comment type="subunit">
    <text evidence="1">Homotrimer.</text>
</comment>
<comment type="similarity">
    <text evidence="1">Belongs to the dCTP deaminase family.</text>
</comment>
<sequence length="188" mass="21138">MSIMSDNWIKKMAESENMISPFVDKQVRTHNNQHILSYGLSSYGYDARVSNEFKIFTNTKPSIIDPKKFDQDCLITKISDICIIPPNSFALGTTIEYFKMPRDVIAICIGKSTYARCGIIINVTPLEPECEGHITLEFSNTTPLPAKIYAGEGACQFLFLKGDQPCNTSYLDRYGRYTKQIGVTLPTV</sequence>
<organism>
    <name type="scientific">Orientia tsutsugamushi (strain Ikeda)</name>
    <name type="common">Rickettsia tsutsugamushi</name>
    <dbReference type="NCBI Taxonomy" id="334380"/>
    <lineage>
        <taxon>Bacteria</taxon>
        <taxon>Pseudomonadati</taxon>
        <taxon>Pseudomonadota</taxon>
        <taxon>Alphaproteobacteria</taxon>
        <taxon>Rickettsiales</taxon>
        <taxon>Rickettsiaceae</taxon>
        <taxon>Rickettsieae</taxon>
        <taxon>Orientia</taxon>
    </lineage>
</organism>
<protein>
    <recommendedName>
        <fullName evidence="1">dCTP deaminase</fullName>
        <ecNumber evidence="1">3.5.4.13</ecNumber>
    </recommendedName>
    <alternativeName>
        <fullName evidence="1">Deoxycytidine triphosphate deaminase</fullName>
    </alternativeName>
</protein>
<proteinExistence type="inferred from homology"/>
<name>DCD_ORITI</name>
<dbReference type="EC" id="3.5.4.13" evidence="1"/>
<dbReference type="EMBL" id="AP008981">
    <property type="protein sequence ID" value="BAG41053.1"/>
    <property type="molecule type" value="Genomic_DNA"/>
</dbReference>
<dbReference type="RefSeq" id="WP_012462053.1">
    <property type="nucleotide sequence ID" value="NC_010793.1"/>
</dbReference>
<dbReference type="SMR" id="B3CUK6"/>
<dbReference type="KEGG" id="ott:OTT_1595"/>
<dbReference type="HOGENOM" id="CLU_087476_4_0_5"/>
<dbReference type="OrthoDB" id="9780956at2"/>
<dbReference type="UniPathway" id="UPA00610">
    <property type="reaction ID" value="UER00665"/>
</dbReference>
<dbReference type="Proteomes" id="UP000001033">
    <property type="component" value="Chromosome"/>
</dbReference>
<dbReference type="GO" id="GO:0008829">
    <property type="term" value="F:dCTP deaminase activity"/>
    <property type="evidence" value="ECO:0007669"/>
    <property type="project" value="UniProtKB-UniRule"/>
</dbReference>
<dbReference type="GO" id="GO:0000166">
    <property type="term" value="F:nucleotide binding"/>
    <property type="evidence" value="ECO:0007669"/>
    <property type="project" value="UniProtKB-KW"/>
</dbReference>
<dbReference type="GO" id="GO:0006226">
    <property type="term" value="P:dUMP biosynthetic process"/>
    <property type="evidence" value="ECO:0007669"/>
    <property type="project" value="UniProtKB-UniPathway"/>
</dbReference>
<dbReference type="GO" id="GO:0006229">
    <property type="term" value="P:dUTP biosynthetic process"/>
    <property type="evidence" value="ECO:0007669"/>
    <property type="project" value="UniProtKB-UniRule"/>
</dbReference>
<dbReference type="CDD" id="cd07557">
    <property type="entry name" value="trimeric_dUTPase"/>
    <property type="match status" value="1"/>
</dbReference>
<dbReference type="FunFam" id="2.70.40.10:FF:000001">
    <property type="entry name" value="dCTP deaminase"/>
    <property type="match status" value="1"/>
</dbReference>
<dbReference type="Gene3D" id="2.70.40.10">
    <property type="match status" value="1"/>
</dbReference>
<dbReference type="HAMAP" id="MF_00146">
    <property type="entry name" value="dCTP_deaminase"/>
    <property type="match status" value="1"/>
</dbReference>
<dbReference type="InterPro" id="IPR011962">
    <property type="entry name" value="dCTP_deaminase"/>
</dbReference>
<dbReference type="InterPro" id="IPR036157">
    <property type="entry name" value="dUTPase-like_sf"/>
</dbReference>
<dbReference type="InterPro" id="IPR033704">
    <property type="entry name" value="dUTPase_trimeric"/>
</dbReference>
<dbReference type="NCBIfam" id="TIGR02274">
    <property type="entry name" value="dCTP_deam"/>
    <property type="match status" value="1"/>
</dbReference>
<dbReference type="PANTHER" id="PTHR42680">
    <property type="entry name" value="DCTP DEAMINASE"/>
    <property type="match status" value="1"/>
</dbReference>
<dbReference type="PANTHER" id="PTHR42680:SF3">
    <property type="entry name" value="DCTP DEAMINASE"/>
    <property type="match status" value="1"/>
</dbReference>
<dbReference type="Pfam" id="PF22769">
    <property type="entry name" value="DCD"/>
    <property type="match status" value="1"/>
</dbReference>
<dbReference type="SUPFAM" id="SSF51283">
    <property type="entry name" value="dUTPase-like"/>
    <property type="match status" value="1"/>
</dbReference>
<reference key="1">
    <citation type="journal article" date="2008" name="DNA Res.">
        <title>The whole-genome sequencing of the obligate intracellular bacterium Orientia tsutsugamushi revealed massive gene amplification during reductive genome evolution.</title>
        <authorList>
            <person name="Nakayama K."/>
            <person name="Yamashita A."/>
            <person name="Kurokawa K."/>
            <person name="Morimoto T."/>
            <person name="Ogawa M."/>
            <person name="Fukuhara M."/>
            <person name="Urakami H."/>
            <person name="Ohnishi M."/>
            <person name="Uchiyama I."/>
            <person name="Ogura Y."/>
            <person name="Ooka T."/>
            <person name="Oshima K."/>
            <person name="Tamura A."/>
            <person name="Hattori M."/>
            <person name="Hayashi T."/>
        </authorList>
    </citation>
    <scope>NUCLEOTIDE SEQUENCE [LARGE SCALE GENOMIC DNA]</scope>
    <source>
        <strain>Ikeda</strain>
    </source>
</reference>
<accession>B3CUK6</accession>
<gene>
    <name evidence="1" type="primary">dcd</name>
    <name type="ordered locus">OTT_1595</name>
</gene>
<keyword id="KW-0378">Hydrolase</keyword>
<keyword id="KW-0546">Nucleotide metabolism</keyword>
<keyword id="KW-0547">Nucleotide-binding</keyword>
<feature type="chain" id="PRO_1000096441" description="dCTP deaminase">
    <location>
        <begin position="1"/>
        <end position="188"/>
    </location>
</feature>
<feature type="active site" description="Proton donor/acceptor" evidence="1">
    <location>
        <position position="137"/>
    </location>
</feature>
<feature type="binding site" evidence="1">
    <location>
        <begin position="111"/>
        <end position="116"/>
    </location>
    <ligand>
        <name>dCTP</name>
        <dbReference type="ChEBI" id="CHEBI:61481"/>
    </ligand>
</feature>
<feature type="binding site" evidence="1">
    <location>
        <begin position="135"/>
        <end position="137"/>
    </location>
    <ligand>
        <name>dCTP</name>
        <dbReference type="ChEBI" id="CHEBI:61481"/>
    </ligand>
</feature>
<feature type="binding site" evidence="1">
    <location>
        <position position="156"/>
    </location>
    <ligand>
        <name>dCTP</name>
        <dbReference type="ChEBI" id="CHEBI:61481"/>
    </ligand>
</feature>
<feature type="binding site" evidence="1">
    <location>
        <position position="170"/>
    </location>
    <ligand>
        <name>dCTP</name>
        <dbReference type="ChEBI" id="CHEBI:61481"/>
    </ligand>
</feature>
<feature type="binding site" evidence="1">
    <location>
        <position position="179"/>
    </location>
    <ligand>
        <name>dCTP</name>
        <dbReference type="ChEBI" id="CHEBI:61481"/>
    </ligand>
</feature>
<feature type="binding site" evidence="1">
    <location>
        <position position="180"/>
    </location>
    <ligand>
        <name>dCTP</name>
        <dbReference type="ChEBI" id="CHEBI:61481"/>
    </ligand>
</feature>
<evidence type="ECO:0000255" key="1">
    <source>
        <dbReference type="HAMAP-Rule" id="MF_00146"/>
    </source>
</evidence>